<proteinExistence type="inferred from homology"/>
<dbReference type="EMBL" id="AE008923">
    <property type="protein sequence ID" value="AAM35851.1"/>
    <property type="molecule type" value="Genomic_DNA"/>
</dbReference>
<dbReference type="RefSeq" id="WP_005917592.1">
    <property type="nucleotide sequence ID" value="NC_003919.1"/>
</dbReference>
<dbReference type="SMR" id="Q8PNS7"/>
<dbReference type="GeneID" id="97509331"/>
<dbReference type="KEGG" id="xac:XAC0968"/>
<dbReference type="eggNOG" id="COG0049">
    <property type="taxonomic scope" value="Bacteria"/>
</dbReference>
<dbReference type="HOGENOM" id="CLU_072226_1_1_6"/>
<dbReference type="Proteomes" id="UP000000576">
    <property type="component" value="Chromosome"/>
</dbReference>
<dbReference type="GO" id="GO:0015935">
    <property type="term" value="C:small ribosomal subunit"/>
    <property type="evidence" value="ECO:0007669"/>
    <property type="project" value="InterPro"/>
</dbReference>
<dbReference type="GO" id="GO:0019843">
    <property type="term" value="F:rRNA binding"/>
    <property type="evidence" value="ECO:0007669"/>
    <property type="project" value="UniProtKB-UniRule"/>
</dbReference>
<dbReference type="GO" id="GO:0003735">
    <property type="term" value="F:structural constituent of ribosome"/>
    <property type="evidence" value="ECO:0007669"/>
    <property type="project" value="InterPro"/>
</dbReference>
<dbReference type="GO" id="GO:0000049">
    <property type="term" value="F:tRNA binding"/>
    <property type="evidence" value="ECO:0007669"/>
    <property type="project" value="UniProtKB-UniRule"/>
</dbReference>
<dbReference type="GO" id="GO:0006412">
    <property type="term" value="P:translation"/>
    <property type="evidence" value="ECO:0007669"/>
    <property type="project" value="UniProtKB-UniRule"/>
</dbReference>
<dbReference type="CDD" id="cd14869">
    <property type="entry name" value="uS7_Bacteria"/>
    <property type="match status" value="1"/>
</dbReference>
<dbReference type="FunFam" id="1.10.455.10:FF:000001">
    <property type="entry name" value="30S ribosomal protein S7"/>
    <property type="match status" value="1"/>
</dbReference>
<dbReference type="Gene3D" id="1.10.455.10">
    <property type="entry name" value="Ribosomal protein S7 domain"/>
    <property type="match status" value="1"/>
</dbReference>
<dbReference type="HAMAP" id="MF_00480_B">
    <property type="entry name" value="Ribosomal_uS7_B"/>
    <property type="match status" value="1"/>
</dbReference>
<dbReference type="InterPro" id="IPR000235">
    <property type="entry name" value="Ribosomal_uS7"/>
</dbReference>
<dbReference type="InterPro" id="IPR005717">
    <property type="entry name" value="Ribosomal_uS7_bac/org-type"/>
</dbReference>
<dbReference type="InterPro" id="IPR020606">
    <property type="entry name" value="Ribosomal_uS7_CS"/>
</dbReference>
<dbReference type="InterPro" id="IPR023798">
    <property type="entry name" value="Ribosomal_uS7_dom"/>
</dbReference>
<dbReference type="InterPro" id="IPR036823">
    <property type="entry name" value="Ribosomal_uS7_dom_sf"/>
</dbReference>
<dbReference type="NCBIfam" id="TIGR01029">
    <property type="entry name" value="rpsG_bact"/>
    <property type="match status" value="1"/>
</dbReference>
<dbReference type="PANTHER" id="PTHR11205">
    <property type="entry name" value="RIBOSOMAL PROTEIN S7"/>
    <property type="match status" value="1"/>
</dbReference>
<dbReference type="Pfam" id="PF00177">
    <property type="entry name" value="Ribosomal_S7"/>
    <property type="match status" value="1"/>
</dbReference>
<dbReference type="PIRSF" id="PIRSF002122">
    <property type="entry name" value="RPS7p_RPS7a_RPS5e_RPS7o"/>
    <property type="match status" value="1"/>
</dbReference>
<dbReference type="SUPFAM" id="SSF47973">
    <property type="entry name" value="Ribosomal protein S7"/>
    <property type="match status" value="1"/>
</dbReference>
<dbReference type="PROSITE" id="PS00052">
    <property type="entry name" value="RIBOSOMAL_S7"/>
    <property type="match status" value="1"/>
</dbReference>
<gene>
    <name evidence="1" type="primary">rpsG</name>
    <name type="ordered locus">XAC0968</name>
</gene>
<sequence>MSRKGSTPQRTVLPDPKHGSETIARFINMVMQSGKKSVAEKIVYGAMDVIGEKNPNAIELVQKALDNVAPAVEVKSRRVGGATYQVPVEVRSSRRMALAMRWLIDSARKRGENTMPRKLAAELLDASESRGGAIKKREETHRMAEANKAFAHYRW</sequence>
<keyword id="KW-0687">Ribonucleoprotein</keyword>
<keyword id="KW-0689">Ribosomal protein</keyword>
<keyword id="KW-0694">RNA-binding</keyword>
<keyword id="KW-0699">rRNA-binding</keyword>
<keyword id="KW-0820">tRNA-binding</keyword>
<comment type="function">
    <text evidence="1">One of the primary rRNA binding proteins, it binds directly to 16S rRNA where it nucleates assembly of the head domain of the 30S subunit. Is located at the subunit interface close to the decoding center, probably blocks exit of the E-site tRNA.</text>
</comment>
<comment type="subunit">
    <text evidence="1">Part of the 30S ribosomal subunit. Contacts proteins S9 and S11.</text>
</comment>
<comment type="similarity">
    <text evidence="1">Belongs to the universal ribosomal protein uS7 family.</text>
</comment>
<protein>
    <recommendedName>
        <fullName evidence="1">Small ribosomal subunit protein uS7</fullName>
    </recommendedName>
    <alternativeName>
        <fullName evidence="2">30S ribosomal protein S7</fullName>
    </alternativeName>
</protein>
<reference key="1">
    <citation type="journal article" date="2002" name="Nature">
        <title>Comparison of the genomes of two Xanthomonas pathogens with differing host specificities.</title>
        <authorList>
            <person name="da Silva A.C.R."/>
            <person name="Ferro J.A."/>
            <person name="Reinach F.C."/>
            <person name="Farah C.S."/>
            <person name="Furlan L.R."/>
            <person name="Quaggio R.B."/>
            <person name="Monteiro-Vitorello C.B."/>
            <person name="Van Sluys M.A."/>
            <person name="Almeida N.F. Jr."/>
            <person name="Alves L.M.C."/>
            <person name="do Amaral A.M."/>
            <person name="Bertolini M.C."/>
            <person name="Camargo L.E.A."/>
            <person name="Camarotte G."/>
            <person name="Cannavan F."/>
            <person name="Cardozo J."/>
            <person name="Chambergo F."/>
            <person name="Ciapina L.P."/>
            <person name="Cicarelli R.M.B."/>
            <person name="Coutinho L.L."/>
            <person name="Cursino-Santos J.R."/>
            <person name="El-Dorry H."/>
            <person name="Faria J.B."/>
            <person name="Ferreira A.J.S."/>
            <person name="Ferreira R.C.C."/>
            <person name="Ferro M.I.T."/>
            <person name="Formighieri E.F."/>
            <person name="Franco M.C."/>
            <person name="Greggio C.C."/>
            <person name="Gruber A."/>
            <person name="Katsuyama A.M."/>
            <person name="Kishi L.T."/>
            <person name="Leite R.P."/>
            <person name="Lemos E.G.M."/>
            <person name="Lemos M.V.F."/>
            <person name="Locali E.C."/>
            <person name="Machado M.A."/>
            <person name="Madeira A.M.B.N."/>
            <person name="Martinez-Rossi N.M."/>
            <person name="Martins E.C."/>
            <person name="Meidanis J."/>
            <person name="Menck C.F.M."/>
            <person name="Miyaki C.Y."/>
            <person name="Moon D.H."/>
            <person name="Moreira L.M."/>
            <person name="Novo M.T.M."/>
            <person name="Okura V.K."/>
            <person name="Oliveira M.C."/>
            <person name="Oliveira V.R."/>
            <person name="Pereira H.A."/>
            <person name="Rossi A."/>
            <person name="Sena J.A.D."/>
            <person name="Silva C."/>
            <person name="de Souza R.F."/>
            <person name="Spinola L.A.F."/>
            <person name="Takita M.A."/>
            <person name="Tamura R.E."/>
            <person name="Teixeira E.C."/>
            <person name="Tezza R.I.D."/>
            <person name="Trindade dos Santos M."/>
            <person name="Truffi D."/>
            <person name="Tsai S.M."/>
            <person name="White F.F."/>
            <person name="Setubal J.C."/>
            <person name="Kitajima J.P."/>
        </authorList>
    </citation>
    <scope>NUCLEOTIDE SEQUENCE [LARGE SCALE GENOMIC DNA]</scope>
    <source>
        <strain>306</strain>
    </source>
</reference>
<organism>
    <name type="scientific">Xanthomonas axonopodis pv. citri (strain 306)</name>
    <dbReference type="NCBI Taxonomy" id="190486"/>
    <lineage>
        <taxon>Bacteria</taxon>
        <taxon>Pseudomonadati</taxon>
        <taxon>Pseudomonadota</taxon>
        <taxon>Gammaproteobacteria</taxon>
        <taxon>Lysobacterales</taxon>
        <taxon>Lysobacteraceae</taxon>
        <taxon>Xanthomonas</taxon>
    </lineage>
</organism>
<evidence type="ECO:0000255" key="1">
    <source>
        <dbReference type="HAMAP-Rule" id="MF_00480"/>
    </source>
</evidence>
<evidence type="ECO:0000305" key="2"/>
<accession>Q8PNS7</accession>
<name>RS7_XANAC</name>
<feature type="chain" id="PRO_0000124384" description="Small ribosomal subunit protein uS7">
    <location>
        <begin position="1"/>
        <end position="155"/>
    </location>
</feature>